<accession>P46356</accession>
<accession>Q0WAG3</accession>
<organism>
    <name type="scientific">Yersinia pestis</name>
    <dbReference type="NCBI Taxonomy" id="632"/>
    <lineage>
        <taxon>Bacteria</taxon>
        <taxon>Pseudomonadati</taxon>
        <taxon>Pseudomonadota</taxon>
        <taxon>Gammaproteobacteria</taxon>
        <taxon>Enterobacterales</taxon>
        <taxon>Yersiniaceae</taxon>
        <taxon>Yersinia</taxon>
    </lineage>
</organism>
<protein>
    <recommendedName>
        <fullName evidence="1">Iron-sulfur cluster assembly protein CyaY</fullName>
    </recommendedName>
</protein>
<name>CYAY_YERPE</name>
<comment type="function">
    <text evidence="1">Involved in iron-sulfur (Fe-S) cluster assembly. May act as a regulator of Fe-S biogenesis.</text>
</comment>
<comment type="similarity">
    <text evidence="1 2">Belongs to the frataxin family.</text>
</comment>
<comment type="sequence caution" evidence="2">
    <conflict type="erroneous initiation">
        <sequence resource="EMBL-CDS" id="AAM83972"/>
    </conflict>
</comment>
<comment type="sequence caution" evidence="2">
    <conflict type="erroneous initiation">
        <sequence resource="EMBL-CDS" id="AAS63368"/>
    </conflict>
</comment>
<keyword id="KW-0408">Iron</keyword>
<keyword id="KW-0479">Metal-binding</keyword>
<keyword id="KW-1185">Reference proteome</keyword>
<dbReference type="EMBL" id="U22968">
    <property type="protein sequence ID" value="AAC44325.1"/>
    <property type="molecule type" value="Genomic_DNA"/>
</dbReference>
<dbReference type="EMBL" id="AL590842">
    <property type="protein sequence ID" value="CAL22434.1"/>
    <property type="molecule type" value="Genomic_DNA"/>
</dbReference>
<dbReference type="EMBL" id="AE009952">
    <property type="protein sequence ID" value="AAM83972.1"/>
    <property type="status" value="ALT_INIT"/>
    <property type="molecule type" value="Genomic_DNA"/>
</dbReference>
<dbReference type="EMBL" id="AE017042">
    <property type="protein sequence ID" value="AAS63368.1"/>
    <property type="status" value="ALT_INIT"/>
    <property type="molecule type" value="Genomic_DNA"/>
</dbReference>
<dbReference type="PIR" id="AG0468">
    <property type="entry name" value="AG0468"/>
</dbReference>
<dbReference type="RefSeq" id="WP_002211469.1">
    <property type="nucleotide sequence ID" value="NZ_WUCM01000033.1"/>
</dbReference>
<dbReference type="RefSeq" id="YP_002348725.1">
    <property type="nucleotide sequence ID" value="NC_003143.1"/>
</dbReference>
<dbReference type="SMR" id="P46356"/>
<dbReference type="STRING" id="214092.YPO3847"/>
<dbReference type="PaxDb" id="214092-YPO3847"/>
<dbReference type="DNASU" id="1145330"/>
<dbReference type="EnsemblBacteria" id="AAS63368">
    <property type="protein sequence ID" value="AAS63368"/>
    <property type="gene ID" value="YP_3200"/>
</dbReference>
<dbReference type="GeneID" id="57974862"/>
<dbReference type="KEGG" id="ype:YPO3847"/>
<dbReference type="KEGG" id="ypk:y0383"/>
<dbReference type="KEGG" id="ypm:YP_3200"/>
<dbReference type="PATRIC" id="fig|214092.21.peg.4370"/>
<dbReference type="eggNOG" id="COG1965">
    <property type="taxonomic scope" value="Bacteria"/>
</dbReference>
<dbReference type="HOGENOM" id="CLU_080880_3_0_6"/>
<dbReference type="OMA" id="EPMHEIW"/>
<dbReference type="OrthoDB" id="285675at2"/>
<dbReference type="Proteomes" id="UP000000815">
    <property type="component" value="Chromosome"/>
</dbReference>
<dbReference type="Proteomes" id="UP000001019">
    <property type="component" value="Chromosome"/>
</dbReference>
<dbReference type="Proteomes" id="UP000002490">
    <property type="component" value="Chromosome"/>
</dbReference>
<dbReference type="GO" id="GO:0005829">
    <property type="term" value="C:cytosol"/>
    <property type="evidence" value="ECO:0000318"/>
    <property type="project" value="GO_Central"/>
</dbReference>
<dbReference type="GO" id="GO:0008199">
    <property type="term" value="F:ferric iron binding"/>
    <property type="evidence" value="ECO:0000318"/>
    <property type="project" value="GO_Central"/>
</dbReference>
<dbReference type="GO" id="GO:0008198">
    <property type="term" value="F:ferrous iron binding"/>
    <property type="evidence" value="ECO:0000318"/>
    <property type="project" value="GO_Central"/>
</dbReference>
<dbReference type="GO" id="GO:0016226">
    <property type="term" value="P:iron-sulfur cluster assembly"/>
    <property type="evidence" value="ECO:0000318"/>
    <property type="project" value="GO_Central"/>
</dbReference>
<dbReference type="CDD" id="cd00503">
    <property type="entry name" value="Frataxin"/>
    <property type="match status" value="1"/>
</dbReference>
<dbReference type="FunFam" id="3.30.920.10:FF:000001">
    <property type="entry name" value="Iron-sulfur cluster assembly protein CyaY"/>
    <property type="match status" value="1"/>
</dbReference>
<dbReference type="Gene3D" id="3.30.920.10">
    <property type="entry name" value="Frataxin/CyaY"/>
    <property type="match status" value="1"/>
</dbReference>
<dbReference type="HAMAP" id="MF_00142">
    <property type="entry name" value="CyaY"/>
    <property type="match status" value="1"/>
</dbReference>
<dbReference type="InterPro" id="IPR047584">
    <property type="entry name" value="CyaY"/>
</dbReference>
<dbReference type="InterPro" id="IPR002908">
    <property type="entry name" value="Frataxin/CyaY"/>
</dbReference>
<dbReference type="InterPro" id="IPR036524">
    <property type="entry name" value="Frataxin/CyaY_sf"/>
</dbReference>
<dbReference type="InterPro" id="IPR020895">
    <property type="entry name" value="Frataxin_CS"/>
</dbReference>
<dbReference type="NCBIfam" id="TIGR03421">
    <property type="entry name" value="FeS_CyaY"/>
    <property type="match status" value="1"/>
</dbReference>
<dbReference type="PANTHER" id="PTHR16821">
    <property type="entry name" value="FRATAXIN"/>
    <property type="match status" value="1"/>
</dbReference>
<dbReference type="PANTHER" id="PTHR16821:SF2">
    <property type="entry name" value="FRATAXIN, MITOCHONDRIAL"/>
    <property type="match status" value="1"/>
</dbReference>
<dbReference type="Pfam" id="PF01491">
    <property type="entry name" value="Frataxin_Cyay"/>
    <property type="match status" value="1"/>
</dbReference>
<dbReference type="SMART" id="SM01219">
    <property type="entry name" value="Frataxin_Cyay"/>
    <property type="match status" value="1"/>
</dbReference>
<dbReference type="SUPFAM" id="SSF55387">
    <property type="entry name" value="Frataxin/Nqo15-like"/>
    <property type="match status" value="1"/>
</dbReference>
<dbReference type="PROSITE" id="PS01344">
    <property type="entry name" value="FRATAXIN_1"/>
    <property type="match status" value="1"/>
</dbReference>
<dbReference type="PROSITE" id="PS50810">
    <property type="entry name" value="FRATAXIN_2"/>
    <property type="match status" value="1"/>
</dbReference>
<reference key="1">
    <citation type="journal article" date="1996" name="Biochimie">
        <title>Comparative analysis of the cya locus in enterobacteria and related Gram-negative facultative anaerobes.</title>
        <authorList>
            <person name="Trotot P."/>
            <person name="Sismeiro O."/>
            <person name="Vivares C."/>
            <person name="Glaser P."/>
            <person name="Bresson-Roy A."/>
            <person name="Danchin A."/>
        </authorList>
    </citation>
    <scope>NUCLEOTIDE SEQUENCE [GENOMIC DNA]</scope>
    <source>
        <strain>EV 40</strain>
    </source>
</reference>
<reference key="2">
    <citation type="journal article" date="2001" name="Nature">
        <title>Genome sequence of Yersinia pestis, the causative agent of plague.</title>
        <authorList>
            <person name="Parkhill J."/>
            <person name="Wren B.W."/>
            <person name="Thomson N.R."/>
            <person name="Titball R.W."/>
            <person name="Holden M.T.G."/>
            <person name="Prentice M.B."/>
            <person name="Sebaihia M."/>
            <person name="James K.D."/>
            <person name="Churcher C.M."/>
            <person name="Mungall K.L."/>
            <person name="Baker S."/>
            <person name="Basham D."/>
            <person name="Bentley S.D."/>
            <person name="Brooks K."/>
            <person name="Cerdeno-Tarraga A.-M."/>
            <person name="Chillingworth T."/>
            <person name="Cronin A."/>
            <person name="Davies R.M."/>
            <person name="Davis P."/>
            <person name="Dougan G."/>
            <person name="Feltwell T."/>
            <person name="Hamlin N."/>
            <person name="Holroyd S."/>
            <person name="Jagels K."/>
            <person name="Karlyshev A.V."/>
            <person name="Leather S."/>
            <person name="Moule S."/>
            <person name="Oyston P.C.F."/>
            <person name="Quail M.A."/>
            <person name="Rutherford K.M."/>
            <person name="Simmonds M."/>
            <person name="Skelton J."/>
            <person name="Stevens K."/>
            <person name="Whitehead S."/>
            <person name="Barrell B.G."/>
        </authorList>
    </citation>
    <scope>NUCLEOTIDE SEQUENCE [LARGE SCALE GENOMIC DNA]</scope>
    <source>
        <strain>CO-92 / Biovar Orientalis</strain>
    </source>
</reference>
<reference key="3">
    <citation type="journal article" date="2002" name="J. Bacteriol.">
        <title>Genome sequence of Yersinia pestis KIM.</title>
        <authorList>
            <person name="Deng W."/>
            <person name="Burland V."/>
            <person name="Plunkett G. III"/>
            <person name="Boutin A."/>
            <person name="Mayhew G.F."/>
            <person name="Liss P."/>
            <person name="Perna N.T."/>
            <person name="Rose D.J."/>
            <person name="Mau B."/>
            <person name="Zhou S."/>
            <person name="Schwartz D.C."/>
            <person name="Fetherston J.D."/>
            <person name="Lindler L.E."/>
            <person name="Brubaker R.R."/>
            <person name="Plano G.V."/>
            <person name="Straley S.C."/>
            <person name="McDonough K.A."/>
            <person name="Nilles M.L."/>
            <person name="Matson J.S."/>
            <person name="Blattner F.R."/>
            <person name="Perry R.D."/>
        </authorList>
    </citation>
    <scope>NUCLEOTIDE SEQUENCE [LARGE SCALE GENOMIC DNA]</scope>
    <source>
        <strain>KIM10+ / Biovar Mediaevalis</strain>
    </source>
</reference>
<reference key="4">
    <citation type="journal article" date="2004" name="DNA Res.">
        <title>Complete genome sequence of Yersinia pestis strain 91001, an isolate avirulent to humans.</title>
        <authorList>
            <person name="Song Y."/>
            <person name="Tong Z."/>
            <person name="Wang J."/>
            <person name="Wang L."/>
            <person name="Guo Z."/>
            <person name="Han Y."/>
            <person name="Zhang J."/>
            <person name="Pei D."/>
            <person name="Zhou D."/>
            <person name="Qin H."/>
            <person name="Pang X."/>
            <person name="Han Y."/>
            <person name="Zhai J."/>
            <person name="Li M."/>
            <person name="Cui B."/>
            <person name="Qi Z."/>
            <person name="Jin L."/>
            <person name="Dai R."/>
            <person name="Chen F."/>
            <person name="Li S."/>
            <person name="Ye C."/>
            <person name="Du Z."/>
            <person name="Lin W."/>
            <person name="Wang J."/>
            <person name="Yu J."/>
            <person name="Yang H."/>
            <person name="Wang J."/>
            <person name="Huang P."/>
            <person name="Yang R."/>
        </authorList>
    </citation>
    <scope>NUCLEOTIDE SEQUENCE [LARGE SCALE GENOMIC DNA]</scope>
    <source>
        <strain>91001 / Biovar Mediaevalis</strain>
    </source>
</reference>
<feature type="chain" id="PRO_0000193970" description="Iron-sulfur cluster assembly protein CyaY">
    <location>
        <begin position="1"/>
        <end position="106"/>
    </location>
</feature>
<gene>
    <name evidence="1" type="primary">cyaY</name>
    <name type="ordered locus">YPO3847</name>
    <name type="ordered locus">y0383</name>
    <name type="ordered locus">YP_3200</name>
</gene>
<evidence type="ECO:0000255" key="1">
    <source>
        <dbReference type="HAMAP-Rule" id="MF_00142"/>
    </source>
</evidence>
<evidence type="ECO:0000305" key="2"/>
<sequence length="106" mass="11904">MNDSEFHQLADQLMLYIEETLDSFTGDSDIDYETNGGVMTLTFENGSKIVINRQEPLHQVWLATKAGGYHFNYRDGHWYCSRSGEEFLAKLSEAASAQAGENVSFG</sequence>
<proteinExistence type="inferred from homology"/>